<keyword id="KW-0030">Aminoacyl-tRNA synthetase</keyword>
<keyword id="KW-0067">ATP-binding</keyword>
<keyword id="KW-0963">Cytoplasm</keyword>
<keyword id="KW-0436">Ligase</keyword>
<keyword id="KW-0547">Nucleotide-binding</keyword>
<keyword id="KW-0648">Protein biosynthesis</keyword>
<keyword id="KW-0694">RNA-binding</keyword>
<sequence length="424" mass="47282">MASSNLIKQLQERGLVAQVTDEDALAERLAQGPIALYCGFDPTADSLHLGHLVPLLCLKRFQQAGHKPVALVGGATGLIGDPSFKAAERKLNTEETVQEWVAKIRKQVAPFLDFDCGENSAIAANNYDWFGSMNVLTFLRDIGKHFSVNQMINKEAVKQRLNRDDQGISFTEFSYNLLQGYDFACLNKLHGVALQIGGSDQWGNITSGIDLTRRLHQNQVFGLTVPLITKADGTKFGKTEGGAVWLDPKKTSPYKFYQFWINTADADVYRFLKFFTFMDIEEINALEEEDKNSGKAPRAQYVLAEQVTRLVHGEEGLVAAKRITECLFSGSLSALSEADFEQLAQDGVPMVEMEKGADLMQALVDAELQPSRGQARKTIASNAVTINGEKQSDPEYIFNDEDRLFGRYTLLRRGKKNYCLICWK</sequence>
<feature type="chain" id="PRO_1000189326" description="Tyrosine--tRNA ligase">
    <location>
        <begin position="1"/>
        <end position="424"/>
    </location>
</feature>
<feature type="domain" description="S4 RNA-binding" evidence="1">
    <location>
        <begin position="357"/>
        <end position="414"/>
    </location>
</feature>
<feature type="short sequence motif" description="'HIGH' region">
    <location>
        <begin position="42"/>
        <end position="51"/>
    </location>
</feature>
<feature type="short sequence motif" description="'KMSKS' region">
    <location>
        <begin position="235"/>
        <end position="239"/>
    </location>
</feature>
<feature type="binding site" evidence="1">
    <location>
        <position position="37"/>
    </location>
    <ligand>
        <name>L-tyrosine</name>
        <dbReference type="ChEBI" id="CHEBI:58315"/>
    </ligand>
</feature>
<feature type="binding site" evidence="1">
    <location>
        <position position="175"/>
    </location>
    <ligand>
        <name>L-tyrosine</name>
        <dbReference type="ChEBI" id="CHEBI:58315"/>
    </ligand>
</feature>
<feature type="binding site" evidence="1">
    <location>
        <position position="179"/>
    </location>
    <ligand>
        <name>L-tyrosine</name>
        <dbReference type="ChEBI" id="CHEBI:58315"/>
    </ligand>
</feature>
<feature type="binding site" evidence="1">
    <location>
        <position position="238"/>
    </location>
    <ligand>
        <name>ATP</name>
        <dbReference type="ChEBI" id="CHEBI:30616"/>
    </ligand>
</feature>
<gene>
    <name evidence="1" type="primary">tyrS</name>
    <name type="ordered locus">SNSL254_A1559</name>
</gene>
<dbReference type="EC" id="6.1.1.1" evidence="1"/>
<dbReference type="EMBL" id="CP001113">
    <property type="protein sequence ID" value="ACF62680.1"/>
    <property type="molecule type" value="Genomic_DNA"/>
</dbReference>
<dbReference type="RefSeq" id="WP_000168626.1">
    <property type="nucleotide sequence ID" value="NZ_CCMR01000003.1"/>
</dbReference>
<dbReference type="SMR" id="B4T586"/>
<dbReference type="KEGG" id="see:SNSL254_A1559"/>
<dbReference type="HOGENOM" id="CLU_024003_0_3_6"/>
<dbReference type="Proteomes" id="UP000008824">
    <property type="component" value="Chromosome"/>
</dbReference>
<dbReference type="GO" id="GO:0005829">
    <property type="term" value="C:cytosol"/>
    <property type="evidence" value="ECO:0007669"/>
    <property type="project" value="TreeGrafter"/>
</dbReference>
<dbReference type="GO" id="GO:0005524">
    <property type="term" value="F:ATP binding"/>
    <property type="evidence" value="ECO:0007669"/>
    <property type="project" value="UniProtKB-UniRule"/>
</dbReference>
<dbReference type="GO" id="GO:0003723">
    <property type="term" value="F:RNA binding"/>
    <property type="evidence" value="ECO:0007669"/>
    <property type="project" value="UniProtKB-KW"/>
</dbReference>
<dbReference type="GO" id="GO:0004831">
    <property type="term" value="F:tyrosine-tRNA ligase activity"/>
    <property type="evidence" value="ECO:0007669"/>
    <property type="project" value="UniProtKB-UniRule"/>
</dbReference>
<dbReference type="GO" id="GO:0006437">
    <property type="term" value="P:tyrosyl-tRNA aminoacylation"/>
    <property type="evidence" value="ECO:0007669"/>
    <property type="project" value="UniProtKB-UniRule"/>
</dbReference>
<dbReference type="CDD" id="cd00165">
    <property type="entry name" value="S4"/>
    <property type="match status" value="1"/>
</dbReference>
<dbReference type="CDD" id="cd00805">
    <property type="entry name" value="TyrRS_core"/>
    <property type="match status" value="1"/>
</dbReference>
<dbReference type="FunFam" id="1.10.240.10:FF:000001">
    <property type="entry name" value="Tyrosine--tRNA ligase"/>
    <property type="match status" value="1"/>
</dbReference>
<dbReference type="FunFam" id="3.10.290.10:FF:000007">
    <property type="entry name" value="Tyrosine--tRNA ligase"/>
    <property type="match status" value="1"/>
</dbReference>
<dbReference type="FunFam" id="3.40.50.620:FF:000008">
    <property type="entry name" value="Tyrosine--tRNA ligase"/>
    <property type="match status" value="1"/>
</dbReference>
<dbReference type="Gene3D" id="3.40.50.620">
    <property type="entry name" value="HUPs"/>
    <property type="match status" value="1"/>
</dbReference>
<dbReference type="Gene3D" id="3.10.290.10">
    <property type="entry name" value="RNA-binding S4 domain"/>
    <property type="match status" value="1"/>
</dbReference>
<dbReference type="Gene3D" id="1.10.240.10">
    <property type="entry name" value="Tyrosyl-Transfer RNA Synthetase"/>
    <property type="match status" value="1"/>
</dbReference>
<dbReference type="HAMAP" id="MF_02006">
    <property type="entry name" value="Tyr_tRNA_synth_type1"/>
    <property type="match status" value="1"/>
</dbReference>
<dbReference type="InterPro" id="IPR001412">
    <property type="entry name" value="aa-tRNA-synth_I_CS"/>
</dbReference>
<dbReference type="InterPro" id="IPR002305">
    <property type="entry name" value="aa-tRNA-synth_Ic"/>
</dbReference>
<dbReference type="InterPro" id="IPR014729">
    <property type="entry name" value="Rossmann-like_a/b/a_fold"/>
</dbReference>
<dbReference type="InterPro" id="IPR002942">
    <property type="entry name" value="S4_RNA-bd"/>
</dbReference>
<dbReference type="InterPro" id="IPR036986">
    <property type="entry name" value="S4_RNA-bd_sf"/>
</dbReference>
<dbReference type="InterPro" id="IPR054608">
    <property type="entry name" value="SYY-like_C"/>
</dbReference>
<dbReference type="InterPro" id="IPR002307">
    <property type="entry name" value="Tyr-tRNA-ligase"/>
</dbReference>
<dbReference type="InterPro" id="IPR024088">
    <property type="entry name" value="Tyr-tRNA-ligase_bac-type"/>
</dbReference>
<dbReference type="InterPro" id="IPR024107">
    <property type="entry name" value="Tyr-tRNA-ligase_bac_1"/>
</dbReference>
<dbReference type="NCBIfam" id="TIGR00234">
    <property type="entry name" value="tyrS"/>
    <property type="match status" value="1"/>
</dbReference>
<dbReference type="PANTHER" id="PTHR11766:SF0">
    <property type="entry name" value="TYROSINE--TRNA LIGASE, MITOCHONDRIAL"/>
    <property type="match status" value="1"/>
</dbReference>
<dbReference type="PANTHER" id="PTHR11766">
    <property type="entry name" value="TYROSYL-TRNA SYNTHETASE"/>
    <property type="match status" value="1"/>
</dbReference>
<dbReference type="Pfam" id="PF22421">
    <property type="entry name" value="SYY_C-terminal"/>
    <property type="match status" value="1"/>
</dbReference>
<dbReference type="Pfam" id="PF00579">
    <property type="entry name" value="tRNA-synt_1b"/>
    <property type="match status" value="1"/>
</dbReference>
<dbReference type="PRINTS" id="PR01040">
    <property type="entry name" value="TRNASYNTHTYR"/>
</dbReference>
<dbReference type="SMART" id="SM00363">
    <property type="entry name" value="S4"/>
    <property type="match status" value="1"/>
</dbReference>
<dbReference type="SUPFAM" id="SSF55174">
    <property type="entry name" value="Alpha-L RNA-binding motif"/>
    <property type="match status" value="1"/>
</dbReference>
<dbReference type="SUPFAM" id="SSF52374">
    <property type="entry name" value="Nucleotidylyl transferase"/>
    <property type="match status" value="1"/>
</dbReference>
<dbReference type="PROSITE" id="PS00178">
    <property type="entry name" value="AA_TRNA_LIGASE_I"/>
    <property type="match status" value="1"/>
</dbReference>
<dbReference type="PROSITE" id="PS50889">
    <property type="entry name" value="S4"/>
    <property type="match status" value="1"/>
</dbReference>
<reference key="1">
    <citation type="journal article" date="2011" name="J. Bacteriol.">
        <title>Comparative genomics of 28 Salmonella enterica isolates: evidence for CRISPR-mediated adaptive sublineage evolution.</title>
        <authorList>
            <person name="Fricke W.F."/>
            <person name="Mammel M.K."/>
            <person name="McDermott P.F."/>
            <person name="Tartera C."/>
            <person name="White D.G."/>
            <person name="Leclerc J.E."/>
            <person name="Ravel J."/>
            <person name="Cebula T.A."/>
        </authorList>
    </citation>
    <scope>NUCLEOTIDE SEQUENCE [LARGE SCALE GENOMIC DNA]</scope>
    <source>
        <strain>SL254</strain>
    </source>
</reference>
<comment type="function">
    <text evidence="1">Catalyzes the attachment of tyrosine to tRNA(Tyr) in a two-step reaction: tyrosine is first activated by ATP to form Tyr-AMP and then transferred to the acceptor end of tRNA(Tyr).</text>
</comment>
<comment type="catalytic activity">
    <reaction evidence="1">
        <text>tRNA(Tyr) + L-tyrosine + ATP = L-tyrosyl-tRNA(Tyr) + AMP + diphosphate + H(+)</text>
        <dbReference type="Rhea" id="RHEA:10220"/>
        <dbReference type="Rhea" id="RHEA-COMP:9706"/>
        <dbReference type="Rhea" id="RHEA-COMP:9707"/>
        <dbReference type="ChEBI" id="CHEBI:15378"/>
        <dbReference type="ChEBI" id="CHEBI:30616"/>
        <dbReference type="ChEBI" id="CHEBI:33019"/>
        <dbReference type="ChEBI" id="CHEBI:58315"/>
        <dbReference type="ChEBI" id="CHEBI:78442"/>
        <dbReference type="ChEBI" id="CHEBI:78536"/>
        <dbReference type="ChEBI" id="CHEBI:456215"/>
        <dbReference type="EC" id="6.1.1.1"/>
    </reaction>
</comment>
<comment type="subunit">
    <text evidence="1">Homodimer.</text>
</comment>
<comment type="subcellular location">
    <subcellularLocation>
        <location evidence="1">Cytoplasm</location>
    </subcellularLocation>
</comment>
<comment type="similarity">
    <text evidence="1">Belongs to the class-I aminoacyl-tRNA synthetase family. TyrS type 1 subfamily.</text>
</comment>
<name>SYY_SALNS</name>
<accession>B4T586</accession>
<proteinExistence type="inferred from homology"/>
<evidence type="ECO:0000255" key="1">
    <source>
        <dbReference type="HAMAP-Rule" id="MF_02006"/>
    </source>
</evidence>
<organism>
    <name type="scientific">Salmonella newport (strain SL254)</name>
    <dbReference type="NCBI Taxonomy" id="423368"/>
    <lineage>
        <taxon>Bacteria</taxon>
        <taxon>Pseudomonadati</taxon>
        <taxon>Pseudomonadota</taxon>
        <taxon>Gammaproteobacteria</taxon>
        <taxon>Enterobacterales</taxon>
        <taxon>Enterobacteriaceae</taxon>
        <taxon>Salmonella</taxon>
    </lineage>
</organism>
<protein>
    <recommendedName>
        <fullName evidence="1">Tyrosine--tRNA ligase</fullName>
        <ecNumber evidence="1">6.1.1.1</ecNumber>
    </recommendedName>
    <alternativeName>
        <fullName evidence="1">Tyrosyl-tRNA synthetase</fullName>
        <shortName evidence="1">TyrRS</shortName>
    </alternativeName>
</protein>